<comment type="function">
    <text evidence="1">Rapidly hydrolyzes choline released into the synapse.</text>
</comment>
<comment type="catalytic activity">
    <reaction>
        <text>acetylcholine + H2O = choline + acetate + H(+)</text>
        <dbReference type="Rhea" id="RHEA:17561"/>
        <dbReference type="ChEBI" id="CHEBI:15354"/>
        <dbReference type="ChEBI" id="CHEBI:15355"/>
        <dbReference type="ChEBI" id="CHEBI:15377"/>
        <dbReference type="ChEBI" id="CHEBI:15378"/>
        <dbReference type="ChEBI" id="CHEBI:30089"/>
        <dbReference type="EC" id="3.1.1.7"/>
    </reaction>
</comment>
<comment type="subcellular location">
    <subcellularLocation>
        <location evidence="1">Synapse</location>
    </subcellularLocation>
    <subcellularLocation>
        <location evidence="1">Secreted</location>
    </subcellularLocation>
    <subcellularLocation>
        <location evidence="1">Cell membrane</location>
        <topology evidence="1">Peripheral membrane protein</topology>
    </subcellularLocation>
</comment>
<comment type="similarity">
    <text evidence="4">Belongs to the type-B carboxylesterase/lipase family.</text>
</comment>
<feature type="signal peptide" evidence="2">
    <location>
        <begin position="1"/>
        <end position="23"/>
    </location>
</feature>
<feature type="chain" id="PRO_0000008611" description="Acetylcholinesterase 4">
    <location>
        <begin position="24"/>
        <end position="604"/>
    </location>
</feature>
<feature type="active site" description="Acyl-ester intermediate" evidence="3">
    <location>
        <position position="219"/>
    </location>
</feature>
<feature type="active site" description="Charge relay system" evidence="1">
    <location>
        <position position="347"/>
    </location>
</feature>
<feature type="active site" description="Charge relay system" evidence="1">
    <location>
        <position position="477"/>
    </location>
</feature>
<feature type="glycosylation site" description="N-linked (GlcNAc...) asparagine" evidence="2">
    <location>
        <position position="96"/>
    </location>
</feature>
<feature type="glycosylation site" description="N-linked (GlcNAc...) asparagine" evidence="2">
    <location>
        <position position="128"/>
    </location>
</feature>
<feature type="glycosylation site" description="N-linked (GlcNAc...) asparagine" evidence="2">
    <location>
        <position position="274"/>
    </location>
</feature>
<feature type="glycosylation site" description="N-linked (GlcNAc...) asparagine" evidence="2">
    <location>
        <position position="299"/>
    </location>
</feature>
<feature type="glycosylation site" description="N-linked (GlcNAc...) asparagine" evidence="2">
    <location>
        <position position="400"/>
    </location>
</feature>
<feature type="glycosylation site" description="N-linked (GlcNAc...) asparagine" evidence="2">
    <location>
        <position position="446"/>
    </location>
</feature>
<feature type="disulfide bond" evidence="1">
    <location>
        <begin position="88"/>
        <end position="115"/>
    </location>
</feature>
<feature type="disulfide bond" evidence="1">
    <location>
        <begin position="273"/>
        <end position="284"/>
    </location>
</feature>
<feature type="disulfide bond" evidence="1">
    <location>
        <begin position="426"/>
        <end position="561"/>
    </location>
</feature>
<evidence type="ECO:0000250" key="1"/>
<evidence type="ECO:0000255" key="2"/>
<evidence type="ECO:0000255" key="3">
    <source>
        <dbReference type="PROSITE-ProRule" id="PRU10039"/>
    </source>
</evidence>
<evidence type="ECO:0000305" key="4"/>
<accession>Q9NDG8</accession>
<accession>A8WTF3</accession>
<accession>Q620F3</accession>
<organism>
    <name type="scientific">Caenorhabditis briggsae</name>
    <dbReference type="NCBI Taxonomy" id="6238"/>
    <lineage>
        <taxon>Eukaryota</taxon>
        <taxon>Metazoa</taxon>
        <taxon>Ecdysozoa</taxon>
        <taxon>Nematoda</taxon>
        <taxon>Chromadorea</taxon>
        <taxon>Rhabditida</taxon>
        <taxon>Rhabditina</taxon>
        <taxon>Rhabditomorpha</taxon>
        <taxon>Rhabditoidea</taxon>
        <taxon>Rhabditidae</taxon>
        <taxon>Peloderinae</taxon>
        <taxon>Caenorhabditis</taxon>
    </lineage>
</organism>
<name>ACE4_CAEBR</name>
<reference key="1">
    <citation type="submission" date="1999-06" db="EMBL/GenBank/DDBJ databases">
        <title>A fourth acetylcholinesterase gene in Caenorhabditis briggsae.</title>
        <authorList>
            <person name="Combes D."/>
            <person name="Grauso M."/>
            <person name="Fedon Y."/>
            <person name="Toutant J.-P."/>
            <person name="Arpagaus M."/>
        </authorList>
    </citation>
    <scope>NUCLEOTIDE SEQUENCE [MRNA]</scope>
    <source>
        <strain>AF16</strain>
    </source>
</reference>
<reference key="2">
    <citation type="journal article" date="2003" name="PLoS Biol.">
        <title>The genome sequence of Caenorhabditis briggsae: a platform for comparative genomics.</title>
        <authorList>
            <person name="Stein L.D."/>
            <person name="Bao Z."/>
            <person name="Blasiar D."/>
            <person name="Blumenthal T."/>
            <person name="Brent M.R."/>
            <person name="Chen N."/>
            <person name="Chinwalla A."/>
            <person name="Clarke L."/>
            <person name="Clee C."/>
            <person name="Coghlan A."/>
            <person name="Coulson A."/>
            <person name="D'Eustachio P."/>
            <person name="Fitch D.H.A."/>
            <person name="Fulton L.A."/>
            <person name="Fulton R.E."/>
            <person name="Griffiths-Jones S."/>
            <person name="Harris T.W."/>
            <person name="Hillier L.W."/>
            <person name="Kamath R."/>
            <person name="Kuwabara P.E."/>
            <person name="Mardis E.R."/>
            <person name="Marra M.A."/>
            <person name="Miner T.L."/>
            <person name="Minx P."/>
            <person name="Mullikin J.C."/>
            <person name="Plumb R.W."/>
            <person name="Rogers J."/>
            <person name="Schein J.E."/>
            <person name="Sohrmann M."/>
            <person name="Spieth J."/>
            <person name="Stajich J.E."/>
            <person name="Wei C."/>
            <person name="Willey D."/>
            <person name="Wilson R.K."/>
            <person name="Durbin R.M."/>
            <person name="Waterston R.H."/>
        </authorList>
    </citation>
    <scope>NUCLEOTIDE SEQUENCE [LARGE SCALE GENOMIC DNA]</scope>
    <source>
        <strain>AF16</strain>
    </source>
</reference>
<proteinExistence type="evidence at transcript level"/>
<sequence>MKPKLVFLPFLIFITVFIEESEAVHPVVLETKLGDIRGNEFFFLSKKIRTFFGVPFAEPPVEEFRFRKPREKKQWKKLFDATKPANACFQTRDNYNTSFWGSEMWNANTQISEDCLYLNIWAPADAYNLTVMVWFFGGGFYSGSPSLSIYDGRALAATQHVIVVNINYRLGPFGFLYLDHPDAPGNMGLLDQQLALHWIRQNIVSFGGNPDKVSVFGQSAGAASIVAHLIAPGSRGLFKNAILQSGSLENTWAINSPFRAKQKSEKLLELVGCNKTTVENSMSCLRLVSPEQLSLSTWNISLTYLEFPFVIVSRDKHFFGHLDARAALREGDFNRDVNLMIGMNKDEGNYWNIYQLPQFFDKAEPPELTRHQFDNLIDSTFSIQPDIIRSAAKYIYSDPNCTDHGRKTRFYAGQMNQIVGDYFFSCDSLWLADQFFLFLQICSTPNGSLKNPPKVFVYYFTQSSSANPWPKWTGAMHGYEIEYVFGVPLSYSKIYKRREQIFSRKIMQFWASFAKNGTPRLRVLKNSEHWPEFNEHNNYRWMQLRSGSNIRPIKRRKETECQFWRRVKDTEYTAYLTQEYSSSCHINSYRILLFIPFFFIFSAF</sequence>
<keyword id="KW-1003">Cell membrane</keyword>
<keyword id="KW-1015">Disulfide bond</keyword>
<keyword id="KW-0325">Glycoprotein</keyword>
<keyword id="KW-0378">Hydrolase</keyword>
<keyword id="KW-0472">Membrane</keyword>
<keyword id="KW-0531">Neurotransmitter degradation</keyword>
<keyword id="KW-1185">Reference proteome</keyword>
<keyword id="KW-0964">Secreted</keyword>
<keyword id="KW-0719">Serine esterase</keyword>
<keyword id="KW-0732">Signal</keyword>
<keyword id="KW-0770">Synapse</keyword>
<dbReference type="EC" id="3.1.1.7"/>
<dbReference type="EMBL" id="AF159505">
    <property type="protein sequence ID" value="AAF80378.1"/>
    <property type="molecule type" value="mRNA"/>
</dbReference>
<dbReference type="EMBL" id="HE601438">
    <property type="protein sequence ID" value="CAP23764.3"/>
    <property type="molecule type" value="Genomic_DNA"/>
</dbReference>
<dbReference type="SMR" id="Q9NDG8"/>
<dbReference type="FunCoup" id="Q9NDG8">
    <property type="interactions" value="58"/>
</dbReference>
<dbReference type="STRING" id="6238.Q9NDG8"/>
<dbReference type="ESTHER" id="caebr-ACHE4">
    <property type="family name" value="ACHE"/>
</dbReference>
<dbReference type="MEROPS" id="S09.980"/>
<dbReference type="GlyCosmos" id="Q9NDG8">
    <property type="glycosylation" value="6 sites, No reported glycans"/>
</dbReference>
<dbReference type="EnsemblMetazoa" id="CBG02827a.1">
    <property type="protein sequence ID" value="CBG02827a.1"/>
    <property type="gene ID" value="WBGene00025805"/>
</dbReference>
<dbReference type="WormBase" id="CBG02827a">
    <property type="protein sequence ID" value="CBP37642"/>
    <property type="gene ID" value="WBGene00025805"/>
    <property type="gene designation" value="Cbr-ace-4"/>
</dbReference>
<dbReference type="eggNOG" id="KOG4389">
    <property type="taxonomic scope" value="Eukaryota"/>
</dbReference>
<dbReference type="HOGENOM" id="CLU_006586_13_0_1"/>
<dbReference type="InParanoid" id="Q9NDG8"/>
<dbReference type="OMA" id="ECQFWRR"/>
<dbReference type="Proteomes" id="UP000008549">
    <property type="component" value="Unassembled WGS sequence"/>
</dbReference>
<dbReference type="GO" id="GO:0005615">
    <property type="term" value="C:extracellular space"/>
    <property type="evidence" value="ECO:0000318"/>
    <property type="project" value="GO_Central"/>
</dbReference>
<dbReference type="GO" id="GO:0005886">
    <property type="term" value="C:plasma membrane"/>
    <property type="evidence" value="ECO:0000318"/>
    <property type="project" value="GO_Central"/>
</dbReference>
<dbReference type="GO" id="GO:0045202">
    <property type="term" value="C:synapse"/>
    <property type="evidence" value="ECO:0007669"/>
    <property type="project" value="UniProtKB-SubCell"/>
</dbReference>
<dbReference type="GO" id="GO:0003990">
    <property type="term" value="F:acetylcholinesterase activity"/>
    <property type="evidence" value="ECO:0007669"/>
    <property type="project" value="UniProtKB-EC"/>
</dbReference>
<dbReference type="FunFam" id="3.40.50.1820:FF:000029">
    <property type="entry name" value="Acetylcholinesterase"/>
    <property type="match status" value="1"/>
</dbReference>
<dbReference type="Gene3D" id="3.40.50.1820">
    <property type="entry name" value="alpha/beta hydrolase"/>
    <property type="match status" value="1"/>
</dbReference>
<dbReference type="InterPro" id="IPR029058">
    <property type="entry name" value="AB_hydrolase_fold"/>
</dbReference>
<dbReference type="InterPro" id="IPR050654">
    <property type="entry name" value="AChE-related_enzymes"/>
</dbReference>
<dbReference type="InterPro" id="IPR002018">
    <property type="entry name" value="CarbesteraseB"/>
</dbReference>
<dbReference type="InterPro" id="IPR019826">
    <property type="entry name" value="Carboxylesterase_B_AS"/>
</dbReference>
<dbReference type="InterPro" id="IPR019819">
    <property type="entry name" value="Carboxylesterase_B_CS"/>
</dbReference>
<dbReference type="InterPro" id="IPR000997">
    <property type="entry name" value="Cholinesterase"/>
</dbReference>
<dbReference type="PANTHER" id="PTHR43918">
    <property type="entry name" value="ACETYLCHOLINESTERASE"/>
    <property type="match status" value="1"/>
</dbReference>
<dbReference type="PANTHER" id="PTHR43918:SF2">
    <property type="entry name" value="CARBOXYLIC ESTER HYDROLASE"/>
    <property type="match status" value="1"/>
</dbReference>
<dbReference type="Pfam" id="PF00135">
    <property type="entry name" value="COesterase"/>
    <property type="match status" value="1"/>
</dbReference>
<dbReference type="PRINTS" id="PR00878">
    <property type="entry name" value="CHOLNESTRASE"/>
</dbReference>
<dbReference type="SUPFAM" id="SSF53474">
    <property type="entry name" value="alpha/beta-Hydrolases"/>
    <property type="match status" value="1"/>
</dbReference>
<dbReference type="PROSITE" id="PS00122">
    <property type="entry name" value="CARBOXYLESTERASE_B_1"/>
    <property type="match status" value="1"/>
</dbReference>
<dbReference type="PROSITE" id="PS00941">
    <property type="entry name" value="CARBOXYLESTERASE_B_2"/>
    <property type="match status" value="1"/>
</dbReference>
<gene>
    <name type="primary">ace-4</name>
    <name type="ORF">CBG02827</name>
</gene>
<protein>
    <recommendedName>
        <fullName>Acetylcholinesterase 4</fullName>
        <shortName>AChE 4</shortName>
        <ecNumber>3.1.1.7</ecNumber>
    </recommendedName>
</protein>